<comment type="function">
    <text evidence="1">May be involved in several stages of intracellular trafficking.</text>
</comment>
<comment type="subcellular location">
    <subcellularLocation>
        <location evidence="1">Cytoplasmic vesicle membrane</location>
        <topology evidence="1">Peripheral membrane protein</topology>
        <orientation evidence="1">Cytoplasmic side</orientation>
    </subcellularLocation>
</comment>
<comment type="domain">
    <text evidence="1">The PX domain mediates specific binding to membranes enriched in phosphatidylinositol 3-phosphate (PtdIns(P3)).</text>
</comment>
<comment type="similarity">
    <text evidence="5">Belongs to the sorting nexin family.</text>
</comment>
<protein>
    <recommendedName>
        <fullName>Sorting nexin-24</fullName>
    </recommendedName>
</protein>
<proteinExistence type="evidence at transcript level"/>
<dbReference type="EMBL" id="BC118214">
    <property type="protein sequence ID" value="AAI18215.1"/>
    <property type="molecule type" value="mRNA"/>
</dbReference>
<dbReference type="RefSeq" id="NP_001069779.1">
    <property type="nucleotide sequence ID" value="NM_001076311.1"/>
</dbReference>
<dbReference type="SMR" id="Q17QS1"/>
<dbReference type="FunCoup" id="Q17QS1">
    <property type="interactions" value="83"/>
</dbReference>
<dbReference type="STRING" id="9913.ENSBTAP00000057224"/>
<dbReference type="PaxDb" id="9913-ENSBTAP00000041510"/>
<dbReference type="Ensembl" id="ENSBTAT00000043983.4">
    <property type="protein sequence ID" value="ENSBTAP00000041510.3"/>
    <property type="gene ID" value="ENSBTAG00000031069.5"/>
</dbReference>
<dbReference type="GeneID" id="614112"/>
<dbReference type="KEGG" id="bta:614112"/>
<dbReference type="CTD" id="28966"/>
<dbReference type="VEuPathDB" id="HostDB:ENSBTAG00000031069"/>
<dbReference type="VGNC" id="VGNC:35103">
    <property type="gene designation" value="SNX24"/>
</dbReference>
<dbReference type="eggNOG" id="KOG2101">
    <property type="taxonomic scope" value="Eukaryota"/>
</dbReference>
<dbReference type="GeneTree" id="ENSGT00390000001280"/>
<dbReference type="HOGENOM" id="CLU_117250_1_0_1"/>
<dbReference type="InParanoid" id="Q17QS1"/>
<dbReference type="OMA" id="RYSTFHA"/>
<dbReference type="OrthoDB" id="93876at2759"/>
<dbReference type="TreeFam" id="TF332414"/>
<dbReference type="Proteomes" id="UP000009136">
    <property type="component" value="Chromosome 7"/>
</dbReference>
<dbReference type="Bgee" id="ENSBTAG00000031069">
    <property type="expression patterns" value="Expressed in oocyte and 107 other cell types or tissues"/>
</dbReference>
<dbReference type="GO" id="GO:0030659">
    <property type="term" value="C:cytoplasmic vesicle membrane"/>
    <property type="evidence" value="ECO:0007669"/>
    <property type="project" value="UniProtKB-SubCell"/>
</dbReference>
<dbReference type="GO" id="GO:1901981">
    <property type="term" value="F:phosphatidylinositol phosphate binding"/>
    <property type="evidence" value="ECO:0000318"/>
    <property type="project" value="GO_Central"/>
</dbReference>
<dbReference type="GO" id="GO:0015031">
    <property type="term" value="P:protein transport"/>
    <property type="evidence" value="ECO:0007669"/>
    <property type="project" value="UniProtKB-KW"/>
</dbReference>
<dbReference type="CDD" id="cd06880">
    <property type="entry name" value="PX_SNX22"/>
    <property type="match status" value="1"/>
</dbReference>
<dbReference type="FunFam" id="3.30.1520.10:FF:000038">
    <property type="entry name" value="sorting nexin-24"/>
    <property type="match status" value="1"/>
</dbReference>
<dbReference type="Gene3D" id="3.30.1520.10">
    <property type="entry name" value="Phox-like domain"/>
    <property type="match status" value="1"/>
</dbReference>
<dbReference type="InterPro" id="IPR001683">
    <property type="entry name" value="PX_dom"/>
</dbReference>
<dbReference type="InterPro" id="IPR036871">
    <property type="entry name" value="PX_dom_sf"/>
</dbReference>
<dbReference type="InterPro" id="IPR052467">
    <property type="entry name" value="Sorting_nexin_PX-domain"/>
</dbReference>
<dbReference type="PANTHER" id="PTHR15813">
    <property type="entry name" value="SORTING NEXIN-22 AND 24"/>
    <property type="match status" value="1"/>
</dbReference>
<dbReference type="PANTHER" id="PTHR15813:SF10">
    <property type="entry name" value="SORTING NEXIN-24"/>
    <property type="match status" value="1"/>
</dbReference>
<dbReference type="Pfam" id="PF00787">
    <property type="entry name" value="PX"/>
    <property type="match status" value="1"/>
</dbReference>
<dbReference type="SMART" id="SM00312">
    <property type="entry name" value="PX"/>
    <property type="match status" value="1"/>
</dbReference>
<dbReference type="SUPFAM" id="SSF64268">
    <property type="entry name" value="PX domain"/>
    <property type="match status" value="1"/>
</dbReference>
<dbReference type="PROSITE" id="PS50195">
    <property type="entry name" value="PX"/>
    <property type="match status" value="1"/>
</dbReference>
<evidence type="ECO:0000250" key="1"/>
<evidence type="ECO:0000250" key="2">
    <source>
        <dbReference type="UniProtKB" id="Q9CRB0"/>
    </source>
</evidence>
<evidence type="ECO:0000250" key="3">
    <source>
        <dbReference type="UniProtKB" id="Q9Y343"/>
    </source>
</evidence>
<evidence type="ECO:0000255" key="4">
    <source>
        <dbReference type="PROSITE-ProRule" id="PRU00147"/>
    </source>
</evidence>
<evidence type="ECO:0000305" key="5"/>
<sequence length="169" mass="19908">MEVYIPSFRYEESDLERGYTVFKIEVLMNGRKHFVEKRYSEFHALHKKLKKCIKTPEIPSKHVRNWVPKVLEQRRQGLETYLQAVILENEELPKLFLDFLNVRHLPSLPKTESYGSFDETESEESSKLSHQPVLLFLRDPYVLPAASDFPNVVIEGVLHGIFYPHLQPR</sequence>
<accession>Q17QS1</accession>
<keyword id="KW-0007">Acetylation</keyword>
<keyword id="KW-0968">Cytoplasmic vesicle</keyword>
<keyword id="KW-0446">Lipid-binding</keyword>
<keyword id="KW-0472">Membrane</keyword>
<keyword id="KW-0597">Phosphoprotein</keyword>
<keyword id="KW-0653">Protein transport</keyword>
<keyword id="KW-1185">Reference proteome</keyword>
<keyword id="KW-0813">Transport</keyword>
<organism>
    <name type="scientific">Bos taurus</name>
    <name type="common">Bovine</name>
    <dbReference type="NCBI Taxonomy" id="9913"/>
    <lineage>
        <taxon>Eukaryota</taxon>
        <taxon>Metazoa</taxon>
        <taxon>Chordata</taxon>
        <taxon>Craniata</taxon>
        <taxon>Vertebrata</taxon>
        <taxon>Euteleostomi</taxon>
        <taxon>Mammalia</taxon>
        <taxon>Eutheria</taxon>
        <taxon>Laurasiatheria</taxon>
        <taxon>Artiodactyla</taxon>
        <taxon>Ruminantia</taxon>
        <taxon>Pecora</taxon>
        <taxon>Bovidae</taxon>
        <taxon>Bovinae</taxon>
        <taxon>Bos</taxon>
    </lineage>
</organism>
<reference key="1">
    <citation type="submission" date="2006-06" db="EMBL/GenBank/DDBJ databases">
        <authorList>
            <consortium name="NIH - Mammalian Gene Collection (MGC) project"/>
        </authorList>
    </citation>
    <scope>NUCLEOTIDE SEQUENCE [LARGE SCALE MRNA]</scope>
    <source>
        <strain>Hereford</strain>
        <tissue>Thalamus</tissue>
    </source>
</reference>
<gene>
    <name type="primary">SNX24</name>
</gene>
<feature type="chain" id="PRO_0000290189" description="Sorting nexin-24">
    <location>
        <begin position="1"/>
        <end position="169"/>
    </location>
</feature>
<feature type="domain" description="PX" evidence="4">
    <location>
        <begin position="1"/>
        <end position="125"/>
    </location>
</feature>
<feature type="binding site" evidence="1">
    <location>
        <position position="38"/>
    </location>
    <ligand>
        <name>a 1,2-diacyl-sn-glycero-3-phospho-(1D-myo-inositol-3-phosphate)</name>
        <dbReference type="ChEBI" id="CHEBI:58088"/>
    </ligand>
</feature>
<feature type="binding site" evidence="1">
    <location>
        <position position="40"/>
    </location>
    <ligand>
        <name>a 1,2-diacyl-sn-glycero-3-phospho-(1D-myo-inositol-3-phosphate)</name>
        <dbReference type="ChEBI" id="CHEBI:58088"/>
    </ligand>
</feature>
<feature type="binding site" evidence="1">
    <location>
        <position position="61"/>
    </location>
    <ligand>
        <name>a 1,2-diacyl-sn-glycero-3-phospho-(1D-myo-inositol-3-phosphate)</name>
        <dbReference type="ChEBI" id="CHEBI:58088"/>
    </ligand>
</feature>
<feature type="binding site" evidence="1">
    <location>
        <position position="74"/>
    </location>
    <ligand>
        <name>a 1,2-diacyl-sn-glycero-3-phospho-(1D-myo-inositol-3-phosphate)</name>
        <dbReference type="ChEBI" id="CHEBI:58088"/>
    </ligand>
</feature>
<feature type="modified residue" description="N-acetylmethionine" evidence="3">
    <location>
        <position position="1"/>
    </location>
</feature>
<feature type="modified residue" description="Phosphoserine" evidence="2">
    <location>
        <position position="113"/>
    </location>
</feature>
<feature type="modified residue" description="Phosphoserine" evidence="2">
    <location>
        <position position="116"/>
    </location>
</feature>
<name>SNX24_BOVIN</name>